<proteinExistence type="inferred from homology"/>
<comment type="function">
    <text evidence="1">Binds together with bS18 to 16S ribosomal RNA.</text>
</comment>
<comment type="similarity">
    <text evidence="1">Belongs to the bacterial ribosomal protein bS6 family.</text>
</comment>
<gene>
    <name evidence="1" type="primary">rpsF</name>
    <name type="ordered locus">Vapar_1818</name>
</gene>
<dbReference type="EMBL" id="CP001635">
    <property type="protein sequence ID" value="ACS18468.1"/>
    <property type="molecule type" value="Genomic_DNA"/>
</dbReference>
<dbReference type="SMR" id="C5CUP0"/>
<dbReference type="STRING" id="543728.Vapar_1818"/>
<dbReference type="KEGG" id="vap:Vapar_1818"/>
<dbReference type="eggNOG" id="COG0360">
    <property type="taxonomic scope" value="Bacteria"/>
</dbReference>
<dbReference type="HOGENOM" id="CLU_113441_6_1_4"/>
<dbReference type="OrthoDB" id="9812702at2"/>
<dbReference type="GO" id="GO:0022627">
    <property type="term" value="C:cytosolic small ribosomal subunit"/>
    <property type="evidence" value="ECO:0007669"/>
    <property type="project" value="TreeGrafter"/>
</dbReference>
<dbReference type="GO" id="GO:0070181">
    <property type="term" value="F:small ribosomal subunit rRNA binding"/>
    <property type="evidence" value="ECO:0007669"/>
    <property type="project" value="TreeGrafter"/>
</dbReference>
<dbReference type="GO" id="GO:0003735">
    <property type="term" value="F:structural constituent of ribosome"/>
    <property type="evidence" value="ECO:0007669"/>
    <property type="project" value="InterPro"/>
</dbReference>
<dbReference type="GO" id="GO:0006412">
    <property type="term" value="P:translation"/>
    <property type="evidence" value="ECO:0007669"/>
    <property type="project" value="UniProtKB-UniRule"/>
</dbReference>
<dbReference type="CDD" id="cd00473">
    <property type="entry name" value="bS6"/>
    <property type="match status" value="1"/>
</dbReference>
<dbReference type="Gene3D" id="3.30.70.60">
    <property type="match status" value="1"/>
</dbReference>
<dbReference type="HAMAP" id="MF_00360">
    <property type="entry name" value="Ribosomal_bS6"/>
    <property type="match status" value="1"/>
</dbReference>
<dbReference type="InterPro" id="IPR000529">
    <property type="entry name" value="Ribosomal_bS6"/>
</dbReference>
<dbReference type="InterPro" id="IPR020815">
    <property type="entry name" value="Ribosomal_bS6_CS"/>
</dbReference>
<dbReference type="InterPro" id="IPR035980">
    <property type="entry name" value="Ribosomal_bS6_sf"/>
</dbReference>
<dbReference type="InterPro" id="IPR020814">
    <property type="entry name" value="Ribosomal_S6_plastid/chlpt"/>
</dbReference>
<dbReference type="InterPro" id="IPR014717">
    <property type="entry name" value="Transl_elong_EF1B/ribsomal_bS6"/>
</dbReference>
<dbReference type="NCBIfam" id="TIGR00166">
    <property type="entry name" value="S6"/>
    <property type="match status" value="1"/>
</dbReference>
<dbReference type="PANTHER" id="PTHR21011">
    <property type="entry name" value="MITOCHONDRIAL 28S RIBOSOMAL PROTEIN S6"/>
    <property type="match status" value="1"/>
</dbReference>
<dbReference type="PANTHER" id="PTHR21011:SF1">
    <property type="entry name" value="SMALL RIBOSOMAL SUBUNIT PROTEIN BS6M"/>
    <property type="match status" value="1"/>
</dbReference>
<dbReference type="Pfam" id="PF01250">
    <property type="entry name" value="Ribosomal_S6"/>
    <property type="match status" value="1"/>
</dbReference>
<dbReference type="SUPFAM" id="SSF54995">
    <property type="entry name" value="Ribosomal protein S6"/>
    <property type="match status" value="1"/>
</dbReference>
<dbReference type="PROSITE" id="PS01048">
    <property type="entry name" value="RIBOSOMAL_S6"/>
    <property type="match status" value="1"/>
</dbReference>
<name>RS6_VARPS</name>
<feature type="chain" id="PRO_1000205410" description="Small ribosomal subunit protein bS6">
    <location>
        <begin position="1"/>
        <end position="124"/>
    </location>
</feature>
<feature type="region of interest" description="Disordered" evidence="2">
    <location>
        <begin position="93"/>
        <end position="124"/>
    </location>
</feature>
<feature type="compositionally biased region" description="Basic and acidic residues" evidence="2">
    <location>
        <begin position="105"/>
        <end position="115"/>
    </location>
</feature>
<protein>
    <recommendedName>
        <fullName evidence="1">Small ribosomal subunit protein bS6</fullName>
    </recommendedName>
    <alternativeName>
        <fullName evidence="3">30S ribosomal protein S6</fullName>
    </alternativeName>
</protein>
<evidence type="ECO:0000255" key="1">
    <source>
        <dbReference type="HAMAP-Rule" id="MF_00360"/>
    </source>
</evidence>
<evidence type="ECO:0000256" key="2">
    <source>
        <dbReference type="SAM" id="MobiDB-lite"/>
    </source>
</evidence>
<evidence type="ECO:0000305" key="3"/>
<accession>C5CUP0</accession>
<sequence length="124" mass="14206">MRHYEIILLIHPDQSEQVPAMLERYKGLITAGGGKVHRVEDWGRRQLAYQINKLSKAHYLCVNIEAEQTVMGELEHAFKFNDAVLRHLTVQKKKAETGPSSMMKTVEREEARKAQQAEYAANNS</sequence>
<organism>
    <name type="scientific">Variovorax paradoxus (strain S110)</name>
    <dbReference type="NCBI Taxonomy" id="543728"/>
    <lineage>
        <taxon>Bacteria</taxon>
        <taxon>Pseudomonadati</taxon>
        <taxon>Pseudomonadota</taxon>
        <taxon>Betaproteobacteria</taxon>
        <taxon>Burkholderiales</taxon>
        <taxon>Comamonadaceae</taxon>
        <taxon>Variovorax</taxon>
    </lineage>
</organism>
<keyword id="KW-0687">Ribonucleoprotein</keyword>
<keyword id="KW-0689">Ribosomal protein</keyword>
<keyword id="KW-0694">RNA-binding</keyword>
<keyword id="KW-0699">rRNA-binding</keyword>
<reference key="1">
    <citation type="journal article" date="2011" name="J. Bacteriol.">
        <title>Complete genome sequence of the metabolically versatile plant growth-promoting endophyte, Variovorax paradoxus S110.</title>
        <authorList>
            <person name="Han J.I."/>
            <person name="Choi H.K."/>
            <person name="Lee S.W."/>
            <person name="Orwin P.M."/>
            <person name="Kim J."/>
            <person name="Laroe S.L."/>
            <person name="Kim T.G."/>
            <person name="O'Neil J."/>
            <person name="Leadbetter J.R."/>
            <person name="Lee S.Y."/>
            <person name="Hur C.G."/>
            <person name="Spain J.C."/>
            <person name="Ovchinnikova G."/>
            <person name="Goodwin L."/>
            <person name="Han C."/>
        </authorList>
    </citation>
    <scope>NUCLEOTIDE SEQUENCE [LARGE SCALE GENOMIC DNA]</scope>
    <source>
        <strain>S110</strain>
    </source>
</reference>